<dbReference type="EC" id="2.5.1.19" evidence="1"/>
<dbReference type="EMBL" id="AL954747">
    <property type="protein sequence ID" value="CAD85875.1"/>
    <property type="molecule type" value="Genomic_DNA"/>
</dbReference>
<dbReference type="RefSeq" id="WP_011112495.1">
    <property type="nucleotide sequence ID" value="NC_004757.1"/>
</dbReference>
<dbReference type="SMR" id="Q82TD4"/>
<dbReference type="STRING" id="228410.NE1964"/>
<dbReference type="GeneID" id="87105117"/>
<dbReference type="KEGG" id="neu:NE1964"/>
<dbReference type="eggNOG" id="COG0128">
    <property type="taxonomic scope" value="Bacteria"/>
</dbReference>
<dbReference type="HOGENOM" id="CLU_024321_0_0_4"/>
<dbReference type="OrthoDB" id="9809920at2"/>
<dbReference type="PhylomeDB" id="Q82TD4"/>
<dbReference type="UniPathway" id="UPA00053">
    <property type="reaction ID" value="UER00089"/>
</dbReference>
<dbReference type="Proteomes" id="UP000001416">
    <property type="component" value="Chromosome"/>
</dbReference>
<dbReference type="GO" id="GO:0005737">
    <property type="term" value="C:cytoplasm"/>
    <property type="evidence" value="ECO:0007669"/>
    <property type="project" value="UniProtKB-SubCell"/>
</dbReference>
<dbReference type="GO" id="GO:0003866">
    <property type="term" value="F:3-phosphoshikimate 1-carboxyvinyltransferase activity"/>
    <property type="evidence" value="ECO:0007669"/>
    <property type="project" value="UniProtKB-UniRule"/>
</dbReference>
<dbReference type="GO" id="GO:0008652">
    <property type="term" value="P:amino acid biosynthetic process"/>
    <property type="evidence" value="ECO:0007669"/>
    <property type="project" value="UniProtKB-KW"/>
</dbReference>
<dbReference type="GO" id="GO:0009073">
    <property type="term" value="P:aromatic amino acid family biosynthetic process"/>
    <property type="evidence" value="ECO:0007669"/>
    <property type="project" value="UniProtKB-KW"/>
</dbReference>
<dbReference type="GO" id="GO:0009423">
    <property type="term" value="P:chorismate biosynthetic process"/>
    <property type="evidence" value="ECO:0007669"/>
    <property type="project" value="UniProtKB-UniRule"/>
</dbReference>
<dbReference type="CDD" id="cd01556">
    <property type="entry name" value="EPSP_synthase"/>
    <property type="match status" value="1"/>
</dbReference>
<dbReference type="FunFam" id="3.65.10.10:FF:000003">
    <property type="entry name" value="3-phosphoshikimate 1-carboxyvinyltransferase"/>
    <property type="match status" value="1"/>
</dbReference>
<dbReference type="FunFam" id="3.65.10.10:FF:000004">
    <property type="entry name" value="3-phosphoshikimate 1-carboxyvinyltransferase"/>
    <property type="match status" value="1"/>
</dbReference>
<dbReference type="Gene3D" id="3.65.10.10">
    <property type="entry name" value="Enolpyruvate transferase domain"/>
    <property type="match status" value="2"/>
</dbReference>
<dbReference type="HAMAP" id="MF_00210">
    <property type="entry name" value="EPSP_synth"/>
    <property type="match status" value="1"/>
</dbReference>
<dbReference type="InterPro" id="IPR001986">
    <property type="entry name" value="Enolpyruvate_Tfrase_dom"/>
</dbReference>
<dbReference type="InterPro" id="IPR036968">
    <property type="entry name" value="Enolpyruvate_Tfrase_sf"/>
</dbReference>
<dbReference type="InterPro" id="IPR006264">
    <property type="entry name" value="EPSP_synthase"/>
</dbReference>
<dbReference type="InterPro" id="IPR023193">
    <property type="entry name" value="EPSP_synthase_CS"/>
</dbReference>
<dbReference type="InterPro" id="IPR013792">
    <property type="entry name" value="RNA3'P_cycl/enolpyr_Trfase_a/b"/>
</dbReference>
<dbReference type="NCBIfam" id="TIGR01356">
    <property type="entry name" value="aroA"/>
    <property type="match status" value="1"/>
</dbReference>
<dbReference type="PANTHER" id="PTHR21090">
    <property type="entry name" value="AROM/DEHYDROQUINATE SYNTHASE"/>
    <property type="match status" value="1"/>
</dbReference>
<dbReference type="PANTHER" id="PTHR21090:SF5">
    <property type="entry name" value="PENTAFUNCTIONAL AROM POLYPEPTIDE"/>
    <property type="match status" value="1"/>
</dbReference>
<dbReference type="Pfam" id="PF00275">
    <property type="entry name" value="EPSP_synthase"/>
    <property type="match status" value="1"/>
</dbReference>
<dbReference type="PIRSF" id="PIRSF000505">
    <property type="entry name" value="EPSPS"/>
    <property type="match status" value="1"/>
</dbReference>
<dbReference type="SUPFAM" id="SSF55205">
    <property type="entry name" value="EPT/RTPC-like"/>
    <property type="match status" value="1"/>
</dbReference>
<dbReference type="PROSITE" id="PS00104">
    <property type="entry name" value="EPSP_SYNTHASE_1"/>
    <property type="match status" value="1"/>
</dbReference>
<dbReference type="PROSITE" id="PS00885">
    <property type="entry name" value="EPSP_SYNTHASE_2"/>
    <property type="match status" value="1"/>
</dbReference>
<keyword id="KW-0028">Amino-acid biosynthesis</keyword>
<keyword id="KW-0057">Aromatic amino acid biosynthesis</keyword>
<keyword id="KW-0963">Cytoplasm</keyword>
<keyword id="KW-1185">Reference proteome</keyword>
<keyword id="KW-0808">Transferase</keyword>
<proteinExistence type="inferred from homology"/>
<comment type="function">
    <text evidence="1">Catalyzes the transfer of the enolpyruvyl moiety of phosphoenolpyruvate (PEP) to the 5-hydroxyl of shikimate-3-phosphate (S3P) to produce enolpyruvyl shikimate-3-phosphate and inorganic phosphate.</text>
</comment>
<comment type="catalytic activity">
    <reaction evidence="1">
        <text>3-phosphoshikimate + phosphoenolpyruvate = 5-O-(1-carboxyvinyl)-3-phosphoshikimate + phosphate</text>
        <dbReference type="Rhea" id="RHEA:21256"/>
        <dbReference type="ChEBI" id="CHEBI:43474"/>
        <dbReference type="ChEBI" id="CHEBI:57701"/>
        <dbReference type="ChEBI" id="CHEBI:58702"/>
        <dbReference type="ChEBI" id="CHEBI:145989"/>
        <dbReference type="EC" id="2.5.1.19"/>
    </reaction>
    <physiologicalReaction direction="left-to-right" evidence="1">
        <dbReference type="Rhea" id="RHEA:21257"/>
    </physiologicalReaction>
</comment>
<comment type="pathway">
    <text evidence="1">Metabolic intermediate biosynthesis; chorismate biosynthesis; chorismate from D-erythrose 4-phosphate and phosphoenolpyruvate: step 6/7.</text>
</comment>
<comment type="subunit">
    <text evidence="1">Monomer.</text>
</comment>
<comment type="subcellular location">
    <subcellularLocation>
        <location evidence="1">Cytoplasm</location>
    </subcellularLocation>
</comment>
<comment type="similarity">
    <text evidence="1">Belongs to the EPSP synthase family.</text>
</comment>
<feature type="chain" id="PRO_1000012455" description="3-phosphoshikimate 1-carboxyvinyltransferase">
    <location>
        <begin position="1"/>
        <end position="431"/>
    </location>
</feature>
<feature type="active site" description="Proton acceptor" evidence="1">
    <location>
        <position position="315"/>
    </location>
</feature>
<feature type="binding site" evidence="1">
    <location>
        <position position="22"/>
    </location>
    <ligand>
        <name>3-phosphoshikimate</name>
        <dbReference type="ChEBI" id="CHEBI:145989"/>
    </ligand>
</feature>
<feature type="binding site" evidence="1">
    <location>
        <position position="22"/>
    </location>
    <ligand>
        <name>phosphoenolpyruvate</name>
        <dbReference type="ChEBI" id="CHEBI:58702"/>
    </ligand>
</feature>
<feature type="binding site" evidence="1">
    <location>
        <position position="23"/>
    </location>
    <ligand>
        <name>3-phosphoshikimate</name>
        <dbReference type="ChEBI" id="CHEBI:145989"/>
    </ligand>
</feature>
<feature type="binding site" evidence="1">
    <location>
        <position position="27"/>
    </location>
    <ligand>
        <name>3-phosphoshikimate</name>
        <dbReference type="ChEBI" id="CHEBI:145989"/>
    </ligand>
</feature>
<feature type="binding site" evidence="1">
    <location>
        <position position="94"/>
    </location>
    <ligand>
        <name>phosphoenolpyruvate</name>
        <dbReference type="ChEBI" id="CHEBI:58702"/>
    </ligand>
</feature>
<feature type="binding site" evidence="1">
    <location>
        <position position="122"/>
    </location>
    <ligand>
        <name>phosphoenolpyruvate</name>
        <dbReference type="ChEBI" id="CHEBI:58702"/>
    </ligand>
</feature>
<feature type="binding site" evidence="1">
    <location>
        <position position="168"/>
    </location>
    <ligand>
        <name>3-phosphoshikimate</name>
        <dbReference type="ChEBI" id="CHEBI:145989"/>
    </ligand>
</feature>
<feature type="binding site" evidence="1">
    <location>
        <position position="169"/>
    </location>
    <ligand>
        <name>3-phosphoshikimate</name>
        <dbReference type="ChEBI" id="CHEBI:145989"/>
    </ligand>
</feature>
<feature type="binding site" evidence="1">
    <location>
        <position position="170"/>
    </location>
    <ligand>
        <name>3-phosphoshikimate</name>
        <dbReference type="ChEBI" id="CHEBI:145989"/>
    </ligand>
</feature>
<feature type="binding site" evidence="1">
    <location>
        <position position="170"/>
    </location>
    <ligand>
        <name>phosphoenolpyruvate</name>
        <dbReference type="ChEBI" id="CHEBI:58702"/>
    </ligand>
</feature>
<feature type="binding site" evidence="1">
    <location>
        <position position="196"/>
    </location>
    <ligand>
        <name>3-phosphoshikimate</name>
        <dbReference type="ChEBI" id="CHEBI:145989"/>
    </ligand>
</feature>
<feature type="binding site" evidence="1">
    <location>
        <position position="315"/>
    </location>
    <ligand>
        <name>3-phosphoshikimate</name>
        <dbReference type="ChEBI" id="CHEBI:145989"/>
    </ligand>
</feature>
<feature type="binding site" evidence="1">
    <location>
        <position position="342"/>
    </location>
    <ligand>
        <name>3-phosphoshikimate</name>
        <dbReference type="ChEBI" id="CHEBI:145989"/>
    </ligand>
</feature>
<feature type="binding site" evidence="1">
    <location>
        <position position="346"/>
    </location>
    <ligand>
        <name>phosphoenolpyruvate</name>
        <dbReference type="ChEBI" id="CHEBI:58702"/>
    </ligand>
</feature>
<feature type="binding site" evidence="1">
    <location>
        <position position="390"/>
    </location>
    <ligand>
        <name>phosphoenolpyruvate</name>
        <dbReference type="ChEBI" id="CHEBI:58702"/>
    </ligand>
</feature>
<feature type="binding site" evidence="1">
    <location>
        <position position="414"/>
    </location>
    <ligand>
        <name>phosphoenolpyruvate</name>
        <dbReference type="ChEBI" id="CHEBI:58702"/>
    </ligand>
</feature>
<evidence type="ECO:0000255" key="1">
    <source>
        <dbReference type="HAMAP-Rule" id="MF_00210"/>
    </source>
</evidence>
<organism>
    <name type="scientific">Nitrosomonas europaea (strain ATCC 19718 / CIP 103999 / KCTC 2705 / NBRC 14298)</name>
    <dbReference type="NCBI Taxonomy" id="228410"/>
    <lineage>
        <taxon>Bacteria</taxon>
        <taxon>Pseudomonadati</taxon>
        <taxon>Pseudomonadota</taxon>
        <taxon>Betaproteobacteria</taxon>
        <taxon>Nitrosomonadales</taxon>
        <taxon>Nitrosomonadaceae</taxon>
        <taxon>Nitrosomonas</taxon>
    </lineage>
</organism>
<sequence length="431" mass="46350">MQWLDLPHVQRAQGNVRLPGSKSISNRILLLSALAEGTTMVSNLLESDDTGRMLDALRLLGVAIVRTDDGKYRVAGCKGKFPVREAELFLGNAGTAFRPLTAVLALMQGHYRLSGVPRMHERPIGDLVDALRQIGAVITCLEHEGFPPLEIHPAVIRPGNISIKGNISSQFLSGLLMALPLTGEPVTIVVSGTLISQPYVALTIAQMARFGVQVKQESWQRFMLPENQTYRSPGKIAVEGDASSASYFLAAGAIAGGPVRIEGAGSDSCQGDIRFVEALEAMGARISMGSDWIESGAPDGGALKAIDFDCNHIPDAAMTLATMALFARGTTTLRNIASWRVKETDRIAAMSAELRKLGARVEAGDDFLRITPPDGPLTADAVIDTYDDHRMAMCFSLVSLSVPVRINDPGCVAKTFPDYFEKFAAITHTPF</sequence>
<protein>
    <recommendedName>
        <fullName evidence="1">3-phosphoshikimate 1-carboxyvinyltransferase</fullName>
        <ecNumber evidence="1">2.5.1.19</ecNumber>
    </recommendedName>
    <alternativeName>
        <fullName evidence="1">5-enolpyruvylshikimate-3-phosphate synthase</fullName>
        <shortName evidence="1">EPSP synthase</shortName>
        <shortName evidence="1">EPSPS</shortName>
    </alternativeName>
</protein>
<accession>Q82TD4</accession>
<gene>
    <name evidence="1" type="primary">aroA</name>
    <name type="ordered locus">NE1964</name>
</gene>
<reference key="1">
    <citation type="journal article" date="2003" name="J. Bacteriol.">
        <title>Complete genome sequence of the ammonia-oxidizing bacterium and obligate chemolithoautotroph Nitrosomonas europaea.</title>
        <authorList>
            <person name="Chain P."/>
            <person name="Lamerdin J.E."/>
            <person name="Larimer F.W."/>
            <person name="Regala W."/>
            <person name="Lao V."/>
            <person name="Land M.L."/>
            <person name="Hauser L."/>
            <person name="Hooper A.B."/>
            <person name="Klotz M.G."/>
            <person name="Norton J."/>
            <person name="Sayavedra-Soto L.A."/>
            <person name="Arciero D.M."/>
            <person name="Hommes N.G."/>
            <person name="Whittaker M.M."/>
            <person name="Arp D.J."/>
        </authorList>
    </citation>
    <scope>NUCLEOTIDE SEQUENCE [LARGE SCALE GENOMIC DNA]</scope>
    <source>
        <strain>ATCC 19718 / CIP 103999 / KCTC 2705 / NBRC 14298</strain>
    </source>
</reference>
<name>AROA_NITEU</name>